<organism>
    <name type="scientific">Bacillus mycoides (strain KBAB4)</name>
    <name type="common">Bacillus weihenstephanensis</name>
    <dbReference type="NCBI Taxonomy" id="315730"/>
    <lineage>
        <taxon>Bacteria</taxon>
        <taxon>Bacillati</taxon>
        <taxon>Bacillota</taxon>
        <taxon>Bacilli</taxon>
        <taxon>Bacillales</taxon>
        <taxon>Bacillaceae</taxon>
        <taxon>Bacillus</taxon>
        <taxon>Bacillus cereus group</taxon>
    </lineage>
</organism>
<reference key="1">
    <citation type="journal article" date="2008" name="Chem. Biol. Interact.">
        <title>Extending the Bacillus cereus group genomics to putative food-borne pathogens of different toxicity.</title>
        <authorList>
            <person name="Lapidus A."/>
            <person name="Goltsman E."/>
            <person name="Auger S."/>
            <person name="Galleron N."/>
            <person name="Segurens B."/>
            <person name="Dossat C."/>
            <person name="Land M.L."/>
            <person name="Broussolle V."/>
            <person name="Brillard J."/>
            <person name="Guinebretiere M.-H."/>
            <person name="Sanchis V."/>
            <person name="Nguen-the C."/>
            <person name="Lereclus D."/>
            <person name="Richardson P."/>
            <person name="Wincker P."/>
            <person name="Weissenbach J."/>
            <person name="Ehrlich S.D."/>
            <person name="Sorokin A."/>
        </authorList>
    </citation>
    <scope>NUCLEOTIDE SEQUENCE [LARGE SCALE GENOMIC DNA]</scope>
    <source>
        <strain>KBAB4</strain>
    </source>
</reference>
<proteinExistence type="inferred from homology"/>
<name>RS20_BACMK</name>
<evidence type="ECO:0000255" key="1">
    <source>
        <dbReference type="HAMAP-Rule" id="MF_00500"/>
    </source>
</evidence>
<evidence type="ECO:0000256" key="2">
    <source>
        <dbReference type="SAM" id="MobiDB-lite"/>
    </source>
</evidence>
<evidence type="ECO:0000305" key="3"/>
<protein>
    <recommendedName>
        <fullName evidence="1">Small ribosomal subunit protein bS20</fullName>
    </recommendedName>
    <alternativeName>
        <fullName evidence="3">30S ribosomal protein S20</fullName>
    </alternativeName>
</protein>
<dbReference type="EMBL" id="CP000903">
    <property type="protein sequence ID" value="ABY45334.1"/>
    <property type="molecule type" value="Genomic_DNA"/>
</dbReference>
<dbReference type="RefSeq" id="WP_002088694.1">
    <property type="nucleotide sequence ID" value="NZ_CAKMRX030000066.1"/>
</dbReference>
<dbReference type="SMR" id="A9VHU9"/>
<dbReference type="GeneID" id="66266103"/>
<dbReference type="KEGG" id="bwe:BcerKBAB4_4173"/>
<dbReference type="eggNOG" id="COG0268">
    <property type="taxonomic scope" value="Bacteria"/>
</dbReference>
<dbReference type="HOGENOM" id="CLU_160655_1_0_9"/>
<dbReference type="Proteomes" id="UP000002154">
    <property type="component" value="Chromosome"/>
</dbReference>
<dbReference type="GO" id="GO:0005829">
    <property type="term" value="C:cytosol"/>
    <property type="evidence" value="ECO:0007669"/>
    <property type="project" value="TreeGrafter"/>
</dbReference>
<dbReference type="GO" id="GO:0015935">
    <property type="term" value="C:small ribosomal subunit"/>
    <property type="evidence" value="ECO:0007669"/>
    <property type="project" value="TreeGrafter"/>
</dbReference>
<dbReference type="GO" id="GO:0070181">
    <property type="term" value="F:small ribosomal subunit rRNA binding"/>
    <property type="evidence" value="ECO:0007669"/>
    <property type="project" value="TreeGrafter"/>
</dbReference>
<dbReference type="GO" id="GO:0003735">
    <property type="term" value="F:structural constituent of ribosome"/>
    <property type="evidence" value="ECO:0007669"/>
    <property type="project" value="InterPro"/>
</dbReference>
<dbReference type="GO" id="GO:0006412">
    <property type="term" value="P:translation"/>
    <property type="evidence" value="ECO:0007669"/>
    <property type="project" value="UniProtKB-UniRule"/>
</dbReference>
<dbReference type="FunFam" id="1.20.58.110:FF:000001">
    <property type="entry name" value="30S ribosomal protein S20"/>
    <property type="match status" value="1"/>
</dbReference>
<dbReference type="Gene3D" id="1.20.58.110">
    <property type="entry name" value="Ribosomal protein S20"/>
    <property type="match status" value="1"/>
</dbReference>
<dbReference type="HAMAP" id="MF_00500">
    <property type="entry name" value="Ribosomal_bS20"/>
    <property type="match status" value="1"/>
</dbReference>
<dbReference type="InterPro" id="IPR002583">
    <property type="entry name" value="Ribosomal_bS20"/>
</dbReference>
<dbReference type="InterPro" id="IPR036510">
    <property type="entry name" value="Ribosomal_bS20_sf"/>
</dbReference>
<dbReference type="NCBIfam" id="TIGR00029">
    <property type="entry name" value="S20"/>
    <property type="match status" value="1"/>
</dbReference>
<dbReference type="PANTHER" id="PTHR33398">
    <property type="entry name" value="30S RIBOSOMAL PROTEIN S20"/>
    <property type="match status" value="1"/>
</dbReference>
<dbReference type="PANTHER" id="PTHR33398:SF1">
    <property type="entry name" value="SMALL RIBOSOMAL SUBUNIT PROTEIN BS20C"/>
    <property type="match status" value="1"/>
</dbReference>
<dbReference type="Pfam" id="PF01649">
    <property type="entry name" value="Ribosomal_S20p"/>
    <property type="match status" value="1"/>
</dbReference>
<dbReference type="SUPFAM" id="SSF46992">
    <property type="entry name" value="Ribosomal protein S20"/>
    <property type="match status" value="1"/>
</dbReference>
<keyword id="KW-0687">Ribonucleoprotein</keyword>
<keyword id="KW-0689">Ribosomal protein</keyword>
<keyword id="KW-0694">RNA-binding</keyword>
<keyword id="KW-0699">rRNA-binding</keyword>
<gene>
    <name evidence="1" type="primary">rpsT</name>
    <name type="ordered locus">BcerKBAB4_4173</name>
</gene>
<sequence length="85" mass="9402">MANIKSAIKRAKLSEERRSHNASIKSDMRTAVKTVETLVTNNDLENAKEAFKTASKKLDKAARKGLIHQNAAARQKSRLAKQVNA</sequence>
<accession>A9VHU9</accession>
<comment type="function">
    <text evidence="1">Binds directly to 16S ribosomal RNA.</text>
</comment>
<comment type="similarity">
    <text evidence="1">Belongs to the bacterial ribosomal protein bS20 family.</text>
</comment>
<feature type="chain" id="PRO_1000126401" description="Small ribosomal subunit protein bS20">
    <location>
        <begin position="1"/>
        <end position="85"/>
    </location>
</feature>
<feature type="region of interest" description="Disordered" evidence="2">
    <location>
        <begin position="1"/>
        <end position="24"/>
    </location>
</feature>